<name>ZG46_XENLA</name>
<reference key="1">
    <citation type="journal article" date="1989" name="J. Mol. Biol.">
        <title>Second-order repeats in Xenopus laevis finger proteins.</title>
        <authorList>
            <person name="Nietfeld W."/>
            <person name="El-Baradi T."/>
            <person name="Mentzel H."/>
            <person name="Pieler T."/>
            <person name="Koester M."/>
            <person name="Poeting A."/>
            <person name="Knoechel W."/>
        </authorList>
    </citation>
    <scope>NUCLEOTIDE SEQUENCE</scope>
</reference>
<proteinExistence type="inferred from homology"/>
<protein>
    <recommendedName>
        <fullName>Gastrula zinc finger protein XlCGF46.1</fullName>
    </recommendedName>
</protein>
<comment type="function">
    <text>May be involved in transcriptional regulation.</text>
</comment>
<comment type="subcellular location">
    <subcellularLocation>
        <location evidence="2">Nucleus</location>
    </subcellularLocation>
</comment>
<comment type="similarity">
    <text evidence="2">Belongs to the krueppel C2H2-type zinc-finger protein family.</text>
</comment>
<organism>
    <name type="scientific">Xenopus laevis</name>
    <name type="common">African clawed frog</name>
    <dbReference type="NCBI Taxonomy" id="8355"/>
    <lineage>
        <taxon>Eukaryota</taxon>
        <taxon>Metazoa</taxon>
        <taxon>Chordata</taxon>
        <taxon>Craniata</taxon>
        <taxon>Vertebrata</taxon>
        <taxon>Euteleostomi</taxon>
        <taxon>Amphibia</taxon>
        <taxon>Batrachia</taxon>
        <taxon>Anura</taxon>
        <taxon>Pipoidea</taxon>
        <taxon>Pipidae</taxon>
        <taxon>Xenopodinae</taxon>
        <taxon>Xenopus</taxon>
        <taxon>Xenopus</taxon>
    </lineage>
</organism>
<accession>P18722</accession>
<sequence length="280" mass="32246">TGLKPFACKECGKSFSNKAYFESHKLMHAGIKPFECTECGKQFLLKQLLKSHQLIHTEETPFVCPECGQGYKSKQGLQNHLLCHTGETNFTCKECGKKFLLQKHLNRHKLTHSSEKPFICSECGKRFSRKDGLGMHQLIHTGEKPYVCTECGTSFRVRPQLRIHLRTHTRETPFKCEDCGRVFATGTKLQVHKVTHTGEKPFTCEKCGKSFTQKTNLNTHQLTHTGGKNFKCEECGKCFSRKDYLRVHQRFHTGEKPYKCNECEESFCRKDLLQTHELSH</sequence>
<evidence type="ECO:0000255" key="1">
    <source>
        <dbReference type="PROSITE-ProRule" id="PRU00042"/>
    </source>
</evidence>
<evidence type="ECO:0000305" key="2"/>
<keyword id="KW-0238">DNA-binding</keyword>
<keyword id="KW-0479">Metal-binding</keyword>
<keyword id="KW-0539">Nucleus</keyword>
<keyword id="KW-1185">Reference proteome</keyword>
<keyword id="KW-0677">Repeat</keyword>
<keyword id="KW-0804">Transcription</keyword>
<keyword id="KW-0805">Transcription regulation</keyword>
<keyword id="KW-0862">Zinc</keyword>
<keyword id="KW-0863">Zinc-finger</keyword>
<feature type="chain" id="PRO_0000047795" description="Gastrula zinc finger protein XlCGF46.1">
    <location>
        <begin position="1" status="less than"/>
        <end position="280" status="greater than"/>
    </location>
</feature>
<feature type="zinc finger region" description="C2H2-type 1" evidence="1">
    <location>
        <begin position="6"/>
        <end position="28"/>
    </location>
</feature>
<feature type="zinc finger region" description="C2H2-type 2" evidence="1">
    <location>
        <begin position="34"/>
        <end position="56"/>
    </location>
</feature>
<feature type="zinc finger region" description="C2H2-type 3" evidence="1">
    <location>
        <begin position="62"/>
        <end position="84"/>
    </location>
</feature>
<feature type="zinc finger region" description="C2H2-type 4" evidence="1">
    <location>
        <begin position="90"/>
        <end position="112"/>
    </location>
</feature>
<feature type="zinc finger region" description="C2H2-type 5" evidence="1">
    <location>
        <begin position="118"/>
        <end position="140"/>
    </location>
</feature>
<feature type="zinc finger region" description="C2H2-type 6" evidence="1">
    <location>
        <begin position="146"/>
        <end position="168"/>
    </location>
</feature>
<feature type="zinc finger region" description="C2H2-type 7" evidence="1">
    <location>
        <begin position="174"/>
        <end position="196"/>
    </location>
</feature>
<feature type="zinc finger region" description="C2H2-type 8" evidence="1">
    <location>
        <begin position="202"/>
        <end position="224"/>
    </location>
</feature>
<feature type="zinc finger region" description="C2H2-type 9" evidence="1">
    <location>
        <begin position="230"/>
        <end position="252"/>
    </location>
</feature>
<feature type="zinc finger region" description="C2H2-type 10" evidence="1">
    <location>
        <begin position="258"/>
        <end position="280"/>
    </location>
</feature>
<feature type="non-terminal residue">
    <location>
        <position position="1"/>
    </location>
</feature>
<feature type="non-terminal residue">
    <location>
        <position position="280"/>
    </location>
</feature>
<dbReference type="PIR" id="S06572">
    <property type="entry name" value="S06572"/>
</dbReference>
<dbReference type="SMR" id="P18722"/>
<dbReference type="Proteomes" id="UP000186698">
    <property type="component" value="Unplaced"/>
</dbReference>
<dbReference type="GO" id="GO:0005634">
    <property type="term" value="C:nucleus"/>
    <property type="evidence" value="ECO:0007669"/>
    <property type="project" value="UniProtKB-SubCell"/>
</dbReference>
<dbReference type="GO" id="GO:0000981">
    <property type="term" value="F:DNA-binding transcription factor activity, RNA polymerase II-specific"/>
    <property type="evidence" value="ECO:0007669"/>
    <property type="project" value="TreeGrafter"/>
</dbReference>
<dbReference type="GO" id="GO:0000978">
    <property type="term" value="F:RNA polymerase II cis-regulatory region sequence-specific DNA binding"/>
    <property type="evidence" value="ECO:0007669"/>
    <property type="project" value="TreeGrafter"/>
</dbReference>
<dbReference type="GO" id="GO:0008270">
    <property type="term" value="F:zinc ion binding"/>
    <property type="evidence" value="ECO:0007669"/>
    <property type="project" value="UniProtKB-KW"/>
</dbReference>
<dbReference type="FunFam" id="3.30.160.60:FF:002169">
    <property type="entry name" value="Zgc:174573"/>
    <property type="match status" value="1"/>
</dbReference>
<dbReference type="FunFam" id="3.30.160.60:FF:000100">
    <property type="entry name" value="Zinc finger 45-like"/>
    <property type="match status" value="1"/>
</dbReference>
<dbReference type="FunFam" id="3.30.160.60:FF:001297">
    <property type="entry name" value="Zinc finger and SCAN domain-containing protein 2"/>
    <property type="match status" value="1"/>
</dbReference>
<dbReference type="FunFam" id="3.30.160.60:FF:000446">
    <property type="entry name" value="Zinc finger protein"/>
    <property type="match status" value="1"/>
</dbReference>
<dbReference type="FunFam" id="3.30.160.60:FF:000478">
    <property type="entry name" value="Zinc finger protein 133"/>
    <property type="match status" value="1"/>
</dbReference>
<dbReference type="FunFam" id="3.30.160.60:FF:000759">
    <property type="entry name" value="zinc finger protein 16"/>
    <property type="match status" value="1"/>
</dbReference>
<dbReference type="FunFam" id="3.30.160.60:FF:000870">
    <property type="entry name" value="zinc finger protein 197 isoform X1"/>
    <property type="match status" value="1"/>
</dbReference>
<dbReference type="FunFam" id="3.30.160.60:FF:002343">
    <property type="entry name" value="Zinc finger protein 33A"/>
    <property type="match status" value="1"/>
</dbReference>
<dbReference type="FunFam" id="3.30.160.60:FF:000912">
    <property type="entry name" value="Zinc finger protein 660"/>
    <property type="match status" value="1"/>
</dbReference>
<dbReference type="FunFam" id="3.30.160.60:FF:000320">
    <property type="entry name" value="Zinc finger protein 777"/>
    <property type="match status" value="1"/>
</dbReference>
<dbReference type="Gene3D" id="3.30.160.60">
    <property type="entry name" value="Classic Zinc Finger"/>
    <property type="match status" value="10"/>
</dbReference>
<dbReference type="InterPro" id="IPR036236">
    <property type="entry name" value="Znf_C2H2_sf"/>
</dbReference>
<dbReference type="InterPro" id="IPR013087">
    <property type="entry name" value="Znf_C2H2_type"/>
</dbReference>
<dbReference type="PANTHER" id="PTHR23235">
    <property type="entry name" value="KRUEPPEL-LIKE TRANSCRIPTION FACTOR"/>
    <property type="match status" value="1"/>
</dbReference>
<dbReference type="PANTHER" id="PTHR23235:SF142">
    <property type="entry name" value="ZINC FINGER PROTEIN 384"/>
    <property type="match status" value="1"/>
</dbReference>
<dbReference type="Pfam" id="PF00096">
    <property type="entry name" value="zf-C2H2"/>
    <property type="match status" value="9"/>
</dbReference>
<dbReference type="SMART" id="SM00355">
    <property type="entry name" value="ZnF_C2H2"/>
    <property type="match status" value="10"/>
</dbReference>
<dbReference type="SUPFAM" id="SSF57667">
    <property type="entry name" value="beta-beta-alpha zinc fingers"/>
    <property type="match status" value="6"/>
</dbReference>
<dbReference type="PROSITE" id="PS00028">
    <property type="entry name" value="ZINC_FINGER_C2H2_1"/>
    <property type="match status" value="10"/>
</dbReference>
<dbReference type="PROSITE" id="PS50157">
    <property type="entry name" value="ZINC_FINGER_C2H2_2"/>
    <property type="match status" value="10"/>
</dbReference>